<organism>
    <name type="scientific">Pelagibacter ubique (strain HTCC1062)</name>
    <dbReference type="NCBI Taxonomy" id="335992"/>
    <lineage>
        <taxon>Bacteria</taxon>
        <taxon>Pseudomonadati</taxon>
        <taxon>Pseudomonadota</taxon>
        <taxon>Alphaproteobacteria</taxon>
        <taxon>Candidatus Pelagibacterales</taxon>
        <taxon>Candidatus Pelagibacteraceae</taxon>
        <taxon>Candidatus Pelagibacter</taxon>
    </lineage>
</organism>
<comment type="function">
    <text evidence="1">Catalyzes the isomerization between 2-isopropylmalate and 3-isopropylmalate, via the formation of 2-isopropylmaleate.</text>
</comment>
<comment type="catalytic activity">
    <reaction evidence="1">
        <text>(2R,3S)-3-isopropylmalate = (2S)-2-isopropylmalate</text>
        <dbReference type="Rhea" id="RHEA:32287"/>
        <dbReference type="ChEBI" id="CHEBI:1178"/>
        <dbReference type="ChEBI" id="CHEBI:35121"/>
        <dbReference type="EC" id="4.2.1.33"/>
    </reaction>
</comment>
<comment type="cofactor">
    <cofactor evidence="1">
        <name>[4Fe-4S] cluster</name>
        <dbReference type="ChEBI" id="CHEBI:49883"/>
    </cofactor>
    <text evidence="1">Binds 1 [4Fe-4S] cluster per subunit.</text>
</comment>
<comment type="pathway">
    <text evidence="1">Amino-acid biosynthesis; L-leucine biosynthesis; L-leucine from 3-methyl-2-oxobutanoate: step 2/4.</text>
</comment>
<comment type="subunit">
    <text evidence="1">Heterodimer of LeuC and LeuD.</text>
</comment>
<comment type="similarity">
    <text evidence="1">Belongs to the aconitase/IPM isomerase family. LeuC type 1 subfamily.</text>
</comment>
<sequence>MPLTLYDKIWNDHLVDQQDDGTALLFVDRHLVHEVTSPQAFEGLRNSNRKVRQPGLTLAVADHNVPTTDRSKGIADAESKIQVDTLESNCKEFGVQYLGMNDKRQGIVHIIGPEQGFTQPGTVIVCGDSHTATHGAFGALAFGIGTSEVEHVLATQTLVQKKAKNFRINVNGKLPIGVTSKDVILQIIGQIGTAGGTGSVIEYAGSLISSLSVEQRMTICNMTIEGGARAGLIAPDEKIFEYLKGKPMSPKNENWDKAMKYWESLKTDDGAKFDKEINLVAEDILPMITWGTSPQDVITIDGKVPNPKNEQDEDKKNSLERSLNYMGLKADTLATDIKIDKVFIGSCTNGRIEDLREAAKILKDKKKASHVQAMVVPGSGLVKEQAEQEGLDKIFIASGFEWREPGCSMCLAMNADKLKPGERCASTSNRNFEGRQGRGGRTHLVSPGMAAAAAISGNLDDVRKYQN</sequence>
<feature type="chain" id="PRO_0000076776" description="3-isopropylmalate dehydratase large subunit">
    <location>
        <begin position="1"/>
        <end position="467"/>
    </location>
</feature>
<feature type="binding site" evidence="1">
    <location>
        <position position="347"/>
    </location>
    <ligand>
        <name>[4Fe-4S] cluster</name>
        <dbReference type="ChEBI" id="CHEBI:49883"/>
    </ligand>
</feature>
<feature type="binding site" evidence="1">
    <location>
        <position position="407"/>
    </location>
    <ligand>
        <name>[4Fe-4S] cluster</name>
        <dbReference type="ChEBI" id="CHEBI:49883"/>
    </ligand>
</feature>
<feature type="binding site" evidence="1">
    <location>
        <position position="410"/>
    </location>
    <ligand>
        <name>[4Fe-4S] cluster</name>
        <dbReference type="ChEBI" id="CHEBI:49883"/>
    </ligand>
</feature>
<evidence type="ECO:0000255" key="1">
    <source>
        <dbReference type="HAMAP-Rule" id="MF_01026"/>
    </source>
</evidence>
<accession>Q4FP15</accession>
<gene>
    <name evidence="1" type="primary">leuC</name>
    <name type="ordered locus">SAR11_0252</name>
</gene>
<name>LEUC_PELUB</name>
<reference key="1">
    <citation type="journal article" date="2005" name="Science">
        <title>Genome streamlining in a cosmopolitan oceanic bacterium.</title>
        <authorList>
            <person name="Giovannoni S.J."/>
            <person name="Tripp H.J."/>
            <person name="Givan S."/>
            <person name="Podar M."/>
            <person name="Vergin K.L."/>
            <person name="Baptista D."/>
            <person name="Bibbs L."/>
            <person name="Eads J."/>
            <person name="Richardson T.H."/>
            <person name="Noordewier M."/>
            <person name="Rappe M.S."/>
            <person name="Short J.M."/>
            <person name="Carrington J.C."/>
            <person name="Mathur E.J."/>
        </authorList>
    </citation>
    <scope>NUCLEOTIDE SEQUENCE [LARGE SCALE GENOMIC DNA]</scope>
    <source>
        <strain>HTCC1062</strain>
    </source>
</reference>
<dbReference type="EC" id="4.2.1.33" evidence="1"/>
<dbReference type="EMBL" id="CP000084">
    <property type="protein sequence ID" value="AAZ21074.1"/>
    <property type="molecule type" value="Genomic_DNA"/>
</dbReference>
<dbReference type="RefSeq" id="WP_006997657.1">
    <property type="nucleotide sequence ID" value="NC_007205.1"/>
</dbReference>
<dbReference type="SMR" id="Q4FP15"/>
<dbReference type="STRING" id="335992.SAR11_0252"/>
<dbReference type="GeneID" id="66294750"/>
<dbReference type="KEGG" id="pub:SAR11_0252"/>
<dbReference type="eggNOG" id="COG0065">
    <property type="taxonomic scope" value="Bacteria"/>
</dbReference>
<dbReference type="HOGENOM" id="CLU_006714_3_4_5"/>
<dbReference type="OrthoDB" id="9802769at2"/>
<dbReference type="UniPathway" id="UPA00048">
    <property type="reaction ID" value="UER00071"/>
</dbReference>
<dbReference type="Proteomes" id="UP000002528">
    <property type="component" value="Chromosome"/>
</dbReference>
<dbReference type="GO" id="GO:0003861">
    <property type="term" value="F:3-isopropylmalate dehydratase activity"/>
    <property type="evidence" value="ECO:0007669"/>
    <property type="project" value="UniProtKB-UniRule"/>
</dbReference>
<dbReference type="GO" id="GO:0051539">
    <property type="term" value="F:4 iron, 4 sulfur cluster binding"/>
    <property type="evidence" value="ECO:0007669"/>
    <property type="project" value="UniProtKB-KW"/>
</dbReference>
<dbReference type="GO" id="GO:0046872">
    <property type="term" value="F:metal ion binding"/>
    <property type="evidence" value="ECO:0007669"/>
    <property type="project" value="UniProtKB-KW"/>
</dbReference>
<dbReference type="GO" id="GO:0009098">
    <property type="term" value="P:L-leucine biosynthetic process"/>
    <property type="evidence" value="ECO:0007669"/>
    <property type="project" value="UniProtKB-UniRule"/>
</dbReference>
<dbReference type="CDD" id="cd01583">
    <property type="entry name" value="IPMI"/>
    <property type="match status" value="1"/>
</dbReference>
<dbReference type="FunFam" id="3.30.499.10:FF:000006">
    <property type="entry name" value="3-isopropylmalate dehydratase large subunit"/>
    <property type="match status" value="1"/>
</dbReference>
<dbReference type="FunFam" id="3.30.499.10:FF:000007">
    <property type="entry name" value="3-isopropylmalate dehydratase large subunit"/>
    <property type="match status" value="1"/>
</dbReference>
<dbReference type="Gene3D" id="3.30.499.10">
    <property type="entry name" value="Aconitase, domain 3"/>
    <property type="match status" value="2"/>
</dbReference>
<dbReference type="HAMAP" id="MF_01026">
    <property type="entry name" value="LeuC_type1"/>
    <property type="match status" value="1"/>
</dbReference>
<dbReference type="InterPro" id="IPR004430">
    <property type="entry name" value="3-IsopropMal_deHydase_lsu"/>
</dbReference>
<dbReference type="InterPro" id="IPR015931">
    <property type="entry name" value="Acnase/IPM_dHydase_lsu_aba_1/3"/>
</dbReference>
<dbReference type="InterPro" id="IPR001030">
    <property type="entry name" value="Acoase/IPM_deHydtase_lsu_aba"/>
</dbReference>
<dbReference type="InterPro" id="IPR018136">
    <property type="entry name" value="Aconitase_4Fe-4S_BS"/>
</dbReference>
<dbReference type="InterPro" id="IPR036008">
    <property type="entry name" value="Aconitase_4Fe-4S_dom"/>
</dbReference>
<dbReference type="InterPro" id="IPR050067">
    <property type="entry name" value="IPM_dehydratase_rel_enz"/>
</dbReference>
<dbReference type="InterPro" id="IPR033941">
    <property type="entry name" value="IPMI_cat"/>
</dbReference>
<dbReference type="NCBIfam" id="TIGR00170">
    <property type="entry name" value="leuC"/>
    <property type="match status" value="1"/>
</dbReference>
<dbReference type="NCBIfam" id="NF004016">
    <property type="entry name" value="PRK05478.1"/>
    <property type="match status" value="1"/>
</dbReference>
<dbReference type="NCBIfam" id="NF009116">
    <property type="entry name" value="PRK12466.1"/>
    <property type="match status" value="1"/>
</dbReference>
<dbReference type="PANTHER" id="PTHR43822:SF9">
    <property type="entry name" value="3-ISOPROPYLMALATE DEHYDRATASE"/>
    <property type="match status" value="1"/>
</dbReference>
<dbReference type="PANTHER" id="PTHR43822">
    <property type="entry name" value="HOMOACONITASE, MITOCHONDRIAL-RELATED"/>
    <property type="match status" value="1"/>
</dbReference>
<dbReference type="Pfam" id="PF00330">
    <property type="entry name" value="Aconitase"/>
    <property type="match status" value="1"/>
</dbReference>
<dbReference type="PRINTS" id="PR00415">
    <property type="entry name" value="ACONITASE"/>
</dbReference>
<dbReference type="SUPFAM" id="SSF53732">
    <property type="entry name" value="Aconitase iron-sulfur domain"/>
    <property type="match status" value="1"/>
</dbReference>
<dbReference type="PROSITE" id="PS00450">
    <property type="entry name" value="ACONITASE_1"/>
    <property type="match status" value="1"/>
</dbReference>
<dbReference type="PROSITE" id="PS01244">
    <property type="entry name" value="ACONITASE_2"/>
    <property type="match status" value="1"/>
</dbReference>
<keyword id="KW-0004">4Fe-4S</keyword>
<keyword id="KW-0028">Amino-acid biosynthesis</keyword>
<keyword id="KW-0100">Branched-chain amino acid biosynthesis</keyword>
<keyword id="KW-0408">Iron</keyword>
<keyword id="KW-0411">Iron-sulfur</keyword>
<keyword id="KW-0432">Leucine biosynthesis</keyword>
<keyword id="KW-0456">Lyase</keyword>
<keyword id="KW-0479">Metal-binding</keyword>
<keyword id="KW-1185">Reference proteome</keyword>
<protein>
    <recommendedName>
        <fullName evidence="1">3-isopropylmalate dehydratase large subunit</fullName>
        <ecNumber evidence="1">4.2.1.33</ecNumber>
    </recommendedName>
    <alternativeName>
        <fullName evidence="1">Alpha-IPM isomerase</fullName>
        <shortName evidence="1">IPMI</shortName>
    </alternativeName>
    <alternativeName>
        <fullName evidence="1">Isopropylmalate isomerase</fullName>
    </alternativeName>
</protein>
<proteinExistence type="inferred from homology"/>